<dbReference type="EC" id="2.7.4.6" evidence="1"/>
<dbReference type="EMBL" id="CP000489">
    <property type="protein sequence ID" value="ABL69843.1"/>
    <property type="molecule type" value="Genomic_DNA"/>
</dbReference>
<dbReference type="RefSeq" id="WP_011748041.1">
    <property type="nucleotide sequence ID" value="NC_008686.1"/>
</dbReference>
<dbReference type="SMR" id="A1B2U9"/>
<dbReference type="STRING" id="318586.Pden_1746"/>
<dbReference type="EnsemblBacteria" id="ABL69843">
    <property type="protein sequence ID" value="ABL69843"/>
    <property type="gene ID" value="Pden_1746"/>
</dbReference>
<dbReference type="GeneID" id="93450138"/>
<dbReference type="KEGG" id="pde:Pden_1746"/>
<dbReference type="eggNOG" id="COG0105">
    <property type="taxonomic scope" value="Bacteria"/>
</dbReference>
<dbReference type="HOGENOM" id="CLU_060216_8_1_5"/>
<dbReference type="OrthoDB" id="9801161at2"/>
<dbReference type="Proteomes" id="UP000000361">
    <property type="component" value="Chromosome 1"/>
</dbReference>
<dbReference type="GO" id="GO:0005737">
    <property type="term" value="C:cytoplasm"/>
    <property type="evidence" value="ECO:0007669"/>
    <property type="project" value="UniProtKB-SubCell"/>
</dbReference>
<dbReference type="GO" id="GO:0005524">
    <property type="term" value="F:ATP binding"/>
    <property type="evidence" value="ECO:0007669"/>
    <property type="project" value="UniProtKB-UniRule"/>
</dbReference>
<dbReference type="GO" id="GO:0046872">
    <property type="term" value="F:metal ion binding"/>
    <property type="evidence" value="ECO:0007669"/>
    <property type="project" value="UniProtKB-KW"/>
</dbReference>
<dbReference type="GO" id="GO:0004550">
    <property type="term" value="F:nucleoside diphosphate kinase activity"/>
    <property type="evidence" value="ECO:0007669"/>
    <property type="project" value="UniProtKB-UniRule"/>
</dbReference>
<dbReference type="GO" id="GO:0006241">
    <property type="term" value="P:CTP biosynthetic process"/>
    <property type="evidence" value="ECO:0007669"/>
    <property type="project" value="UniProtKB-UniRule"/>
</dbReference>
<dbReference type="GO" id="GO:0006183">
    <property type="term" value="P:GTP biosynthetic process"/>
    <property type="evidence" value="ECO:0007669"/>
    <property type="project" value="UniProtKB-UniRule"/>
</dbReference>
<dbReference type="GO" id="GO:0006228">
    <property type="term" value="P:UTP biosynthetic process"/>
    <property type="evidence" value="ECO:0007669"/>
    <property type="project" value="UniProtKB-UniRule"/>
</dbReference>
<dbReference type="CDD" id="cd04413">
    <property type="entry name" value="NDPk_I"/>
    <property type="match status" value="1"/>
</dbReference>
<dbReference type="FunFam" id="3.30.70.141:FF:000001">
    <property type="entry name" value="Nucleoside diphosphate kinase"/>
    <property type="match status" value="1"/>
</dbReference>
<dbReference type="Gene3D" id="3.30.70.141">
    <property type="entry name" value="Nucleoside diphosphate kinase-like domain"/>
    <property type="match status" value="1"/>
</dbReference>
<dbReference type="HAMAP" id="MF_00451">
    <property type="entry name" value="NDP_kinase"/>
    <property type="match status" value="1"/>
</dbReference>
<dbReference type="InterPro" id="IPR034907">
    <property type="entry name" value="NDK-like_dom"/>
</dbReference>
<dbReference type="InterPro" id="IPR036850">
    <property type="entry name" value="NDK-like_dom_sf"/>
</dbReference>
<dbReference type="InterPro" id="IPR001564">
    <property type="entry name" value="Nucleoside_diP_kinase"/>
</dbReference>
<dbReference type="InterPro" id="IPR023005">
    <property type="entry name" value="Nucleoside_diP_kinase_AS"/>
</dbReference>
<dbReference type="NCBIfam" id="NF001908">
    <property type="entry name" value="PRK00668.1"/>
    <property type="match status" value="1"/>
</dbReference>
<dbReference type="PANTHER" id="PTHR46161">
    <property type="entry name" value="NUCLEOSIDE DIPHOSPHATE KINASE"/>
    <property type="match status" value="1"/>
</dbReference>
<dbReference type="PANTHER" id="PTHR46161:SF3">
    <property type="entry name" value="NUCLEOSIDE DIPHOSPHATE KINASE DDB_G0292928-RELATED"/>
    <property type="match status" value="1"/>
</dbReference>
<dbReference type="Pfam" id="PF00334">
    <property type="entry name" value="NDK"/>
    <property type="match status" value="1"/>
</dbReference>
<dbReference type="PRINTS" id="PR01243">
    <property type="entry name" value="NUCDPKINASE"/>
</dbReference>
<dbReference type="SMART" id="SM00562">
    <property type="entry name" value="NDK"/>
    <property type="match status" value="1"/>
</dbReference>
<dbReference type="SUPFAM" id="SSF54919">
    <property type="entry name" value="Nucleoside diphosphate kinase, NDK"/>
    <property type="match status" value="1"/>
</dbReference>
<dbReference type="PROSITE" id="PS00469">
    <property type="entry name" value="NDPK"/>
    <property type="match status" value="1"/>
</dbReference>
<dbReference type="PROSITE" id="PS51374">
    <property type="entry name" value="NDPK_LIKE"/>
    <property type="match status" value="1"/>
</dbReference>
<feature type="chain" id="PRO_1000026265" description="Nucleoside diphosphate kinase">
    <location>
        <begin position="1"/>
        <end position="140"/>
    </location>
</feature>
<feature type="active site" description="Pros-phosphohistidine intermediate" evidence="1">
    <location>
        <position position="117"/>
    </location>
</feature>
<feature type="binding site" evidence="1">
    <location>
        <position position="11"/>
    </location>
    <ligand>
        <name>ATP</name>
        <dbReference type="ChEBI" id="CHEBI:30616"/>
    </ligand>
</feature>
<feature type="binding site" evidence="1">
    <location>
        <position position="59"/>
    </location>
    <ligand>
        <name>ATP</name>
        <dbReference type="ChEBI" id="CHEBI:30616"/>
    </ligand>
</feature>
<feature type="binding site" evidence="1">
    <location>
        <position position="87"/>
    </location>
    <ligand>
        <name>ATP</name>
        <dbReference type="ChEBI" id="CHEBI:30616"/>
    </ligand>
</feature>
<feature type="binding site" evidence="1">
    <location>
        <position position="93"/>
    </location>
    <ligand>
        <name>ATP</name>
        <dbReference type="ChEBI" id="CHEBI:30616"/>
    </ligand>
</feature>
<feature type="binding site" evidence="1">
    <location>
        <position position="104"/>
    </location>
    <ligand>
        <name>ATP</name>
        <dbReference type="ChEBI" id="CHEBI:30616"/>
    </ligand>
</feature>
<feature type="binding site" evidence="1">
    <location>
        <position position="114"/>
    </location>
    <ligand>
        <name>ATP</name>
        <dbReference type="ChEBI" id="CHEBI:30616"/>
    </ligand>
</feature>
<reference key="1">
    <citation type="submission" date="2006-12" db="EMBL/GenBank/DDBJ databases">
        <title>Complete sequence of chromosome 1 of Paracoccus denitrificans PD1222.</title>
        <authorList>
            <person name="Copeland A."/>
            <person name="Lucas S."/>
            <person name="Lapidus A."/>
            <person name="Barry K."/>
            <person name="Detter J.C."/>
            <person name="Glavina del Rio T."/>
            <person name="Hammon N."/>
            <person name="Israni S."/>
            <person name="Dalin E."/>
            <person name="Tice H."/>
            <person name="Pitluck S."/>
            <person name="Munk A.C."/>
            <person name="Brettin T."/>
            <person name="Bruce D."/>
            <person name="Han C."/>
            <person name="Tapia R."/>
            <person name="Gilna P."/>
            <person name="Schmutz J."/>
            <person name="Larimer F."/>
            <person name="Land M."/>
            <person name="Hauser L."/>
            <person name="Kyrpides N."/>
            <person name="Lykidis A."/>
            <person name="Spiro S."/>
            <person name="Richardson D.J."/>
            <person name="Moir J.W.B."/>
            <person name="Ferguson S.J."/>
            <person name="van Spanning R.J.M."/>
            <person name="Richardson P."/>
        </authorList>
    </citation>
    <scope>NUCLEOTIDE SEQUENCE [LARGE SCALE GENOMIC DNA]</scope>
    <source>
        <strain>Pd 1222</strain>
    </source>
</reference>
<evidence type="ECO:0000255" key="1">
    <source>
        <dbReference type="HAMAP-Rule" id="MF_00451"/>
    </source>
</evidence>
<protein>
    <recommendedName>
        <fullName evidence="1">Nucleoside diphosphate kinase</fullName>
        <shortName evidence="1">NDK</shortName>
        <shortName evidence="1">NDP kinase</shortName>
        <ecNumber evidence="1">2.7.4.6</ecNumber>
    </recommendedName>
    <alternativeName>
        <fullName evidence="1">Nucleoside-2-P kinase</fullName>
    </alternativeName>
</protein>
<accession>A1B2U9</accession>
<name>NDK_PARDP</name>
<keyword id="KW-0067">ATP-binding</keyword>
<keyword id="KW-0963">Cytoplasm</keyword>
<keyword id="KW-0418">Kinase</keyword>
<keyword id="KW-0460">Magnesium</keyword>
<keyword id="KW-0479">Metal-binding</keyword>
<keyword id="KW-0546">Nucleotide metabolism</keyword>
<keyword id="KW-0547">Nucleotide-binding</keyword>
<keyword id="KW-0597">Phosphoprotein</keyword>
<keyword id="KW-1185">Reference proteome</keyword>
<keyword id="KW-0808">Transferase</keyword>
<proteinExistence type="inferred from homology"/>
<gene>
    <name evidence="1" type="primary">ndk</name>
    <name type="ordered locus">Pden_1746</name>
</gene>
<comment type="function">
    <text evidence="1">Major role in the synthesis of nucleoside triphosphates other than ATP. The ATP gamma phosphate is transferred to the NDP beta phosphate via a ping-pong mechanism, using a phosphorylated active-site intermediate.</text>
</comment>
<comment type="catalytic activity">
    <reaction evidence="1">
        <text>a 2'-deoxyribonucleoside 5'-diphosphate + ATP = a 2'-deoxyribonucleoside 5'-triphosphate + ADP</text>
        <dbReference type="Rhea" id="RHEA:44640"/>
        <dbReference type="ChEBI" id="CHEBI:30616"/>
        <dbReference type="ChEBI" id="CHEBI:61560"/>
        <dbReference type="ChEBI" id="CHEBI:73316"/>
        <dbReference type="ChEBI" id="CHEBI:456216"/>
        <dbReference type="EC" id="2.7.4.6"/>
    </reaction>
</comment>
<comment type="catalytic activity">
    <reaction evidence="1">
        <text>a ribonucleoside 5'-diphosphate + ATP = a ribonucleoside 5'-triphosphate + ADP</text>
        <dbReference type="Rhea" id="RHEA:18113"/>
        <dbReference type="ChEBI" id="CHEBI:30616"/>
        <dbReference type="ChEBI" id="CHEBI:57930"/>
        <dbReference type="ChEBI" id="CHEBI:61557"/>
        <dbReference type="ChEBI" id="CHEBI:456216"/>
        <dbReference type="EC" id="2.7.4.6"/>
    </reaction>
</comment>
<comment type="cofactor">
    <cofactor evidence="1">
        <name>Mg(2+)</name>
        <dbReference type="ChEBI" id="CHEBI:18420"/>
    </cofactor>
</comment>
<comment type="subunit">
    <text evidence="1">Homotetramer.</text>
</comment>
<comment type="subcellular location">
    <subcellularLocation>
        <location evidence="1">Cytoplasm</location>
    </subcellularLocation>
</comment>
<comment type="similarity">
    <text evidence="1">Belongs to the NDK family.</text>
</comment>
<organism>
    <name type="scientific">Paracoccus denitrificans (strain Pd 1222)</name>
    <dbReference type="NCBI Taxonomy" id="318586"/>
    <lineage>
        <taxon>Bacteria</taxon>
        <taxon>Pseudomonadati</taxon>
        <taxon>Pseudomonadota</taxon>
        <taxon>Alphaproteobacteria</taxon>
        <taxon>Rhodobacterales</taxon>
        <taxon>Paracoccaceae</taxon>
        <taxon>Paracoccus</taxon>
    </lineage>
</organism>
<sequence>MAIERTLSIIKPDATKRNLTGKINAKFEEAGLRIVAQKRIQLTLAQAGQFYAEHKERPFYGELTEFMTSEPVVVQVLEGEGAILKNREVMGATNPANADEGTIRKEFALSVGENSVHGSDSPEAAAREIAFFFSGLELVG</sequence>